<proteinExistence type="inferred from homology"/>
<organism>
    <name type="scientific">Burkholderia pseudomallei (strain K96243)</name>
    <dbReference type="NCBI Taxonomy" id="272560"/>
    <lineage>
        <taxon>Bacteria</taxon>
        <taxon>Pseudomonadati</taxon>
        <taxon>Pseudomonadota</taxon>
        <taxon>Betaproteobacteria</taxon>
        <taxon>Burkholderiales</taxon>
        <taxon>Burkholderiaceae</taxon>
        <taxon>Burkholderia</taxon>
        <taxon>pseudomallei group</taxon>
    </lineage>
</organism>
<feature type="chain" id="PRO_0000270867" description="Type III pantothenate kinase">
    <location>
        <begin position="1"/>
        <end position="259"/>
    </location>
</feature>
<feature type="active site" description="Proton acceptor" evidence="1">
    <location>
        <position position="102"/>
    </location>
</feature>
<feature type="binding site" evidence="1">
    <location>
        <begin position="9"/>
        <end position="16"/>
    </location>
    <ligand>
        <name>ATP</name>
        <dbReference type="ChEBI" id="CHEBI:30616"/>
    </ligand>
</feature>
<feature type="binding site" evidence="1">
    <location>
        <position position="93"/>
    </location>
    <ligand>
        <name>substrate</name>
    </ligand>
</feature>
<feature type="binding site" evidence="1">
    <location>
        <begin position="100"/>
        <end position="103"/>
    </location>
    <ligand>
        <name>substrate</name>
    </ligand>
</feature>
<feature type="binding site" evidence="1">
    <location>
        <position position="126"/>
    </location>
    <ligand>
        <name>ATP</name>
        <dbReference type="ChEBI" id="CHEBI:30616"/>
    </ligand>
</feature>
<feature type="binding site" evidence="1">
    <location>
        <position position="190"/>
    </location>
    <ligand>
        <name>substrate</name>
    </ligand>
</feature>
<name>COAX_BURPS</name>
<gene>
    <name evidence="1" type="primary">coaX</name>
    <name type="ordered locus">BPSL0397</name>
</gene>
<reference key="1">
    <citation type="journal article" date="2004" name="Proc. Natl. Acad. Sci. U.S.A.">
        <title>Genomic plasticity of the causative agent of melioidosis, Burkholderia pseudomallei.</title>
        <authorList>
            <person name="Holden M.T.G."/>
            <person name="Titball R.W."/>
            <person name="Peacock S.J."/>
            <person name="Cerdeno-Tarraga A.-M."/>
            <person name="Atkins T."/>
            <person name="Crossman L.C."/>
            <person name="Pitt T."/>
            <person name="Churcher C."/>
            <person name="Mungall K.L."/>
            <person name="Bentley S.D."/>
            <person name="Sebaihia M."/>
            <person name="Thomson N.R."/>
            <person name="Bason N."/>
            <person name="Beacham I.R."/>
            <person name="Brooks K."/>
            <person name="Brown K.A."/>
            <person name="Brown N.F."/>
            <person name="Challis G.L."/>
            <person name="Cherevach I."/>
            <person name="Chillingworth T."/>
            <person name="Cronin A."/>
            <person name="Crossett B."/>
            <person name="Davis P."/>
            <person name="DeShazer D."/>
            <person name="Feltwell T."/>
            <person name="Fraser A."/>
            <person name="Hance Z."/>
            <person name="Hauser H."/>
            <person name="Holroyd S."/>
            <person name="Jagels K."/>
            <person name="Keith K.E."/>
            <person name="Maddison M."/>
            <person name="Moule S."/>
            <person name="Price C."/>
            <person name="Quail M.A."/>
            <person name="Rabbinowitsch E."/>
            <person name="Rutherford K."/>
            <person name="Sanders M."/>
            <person name="Simmonds M."/>
            <person name="Songsivilai S."/>
            <person name="Stevens K."/>
            <person name="Tumapa S."/>
            <person name="Vesaratchavest M."/>
            <person name="Whitehead S."/>
            <person name="Yeats C."/>
            <person name="Barrell B.G."/>
            <person name="Oyston P.C.F."/>
            <person name="Parkhill J."/>
        </authorList>
    </citation>
    <scope>NUCLEOTIDE SEQUENCE [LARGE SCALE GENOMIC DNA]</scope>
    <source>
        <strain>K96243</strain>
    </source>
</reference>
<evidence type="ECO:0000255" key="1">
    <source>
        <dbReference type="HAMAP-Rule" id="MF_01274"/>
    </source>
</evidence>
<dbReference type="EC" id="2.7.1.33" evidence="1"/>
<dbReference type="EMBL" id="BX571965">
    <property type="protein sequence ID" value="CAH34385.1"/>
    <property type="molecule type" value="Genomic_DNA"/>
</dbReference>
<dbReference type="RefSeq" id="YP_107023.1">
    <property type="nucleotide sequence ID" value="NC_006350.1"/>
</dbReference>
<dbReference type="SMR" id="Q63XZ2"/>
<dbReference type="STRING" id="272560.BPSL0397"/>
<dbReference type="KEGG" id="bps:BPSL0397"/>
<dbReference type="PATRIC" id="fig|272560.51.peg.1268"/>
<dbReference type="eggNOG" id="COG1521">
    <property type="taxonomic scope" value="Bacteria"/>
</dbReference>
<dbReference type="UniPathway" id="UPA00241">
    <property type="reaction ID" value="UER00352"/>
</dbReference>
<dbReference type="Proteomes" id="UP000000605">
    <property type="component" value="Chromosome 1"/>
</dbReference>
<dbReference type="GO" id="GO:0005737">
    <property type="term" value="C:cytoplasm"/>
    <property type="evidence" value="ECO:0007669"/>
    <property type="project" value="UniProtKB-SubCell"/>
</dbReference>
<dbReference type="GO" id="GO:0005524">
    <property type="term" value="F:ATP binding"/>
    <property type="evidence" value="ECO:0007669"/>
    <property type="project" value="UniProtKB-UniRule"/>
</dbReference>
<dbReference type="GO" id="GO:0004594">
    <property type="term" value="F:pantothenate kinase activity"/>
    <property type="evidence" value="ECO:0007669"/>
    <property type="project" value="UniProtKB-UniRule"/>
</dbReference>
<dbReference type="GO" id="GO:0015937">
    <property type="term" value="P:coenzyme A biosynthetic process"/>
    <property type="evidence" value="ECO:0007669"/>
    <property type="project" value="UniProtKB-UniRule"/>
</dbReference>
<dbReference type="CDD" id="cd24015">
    <property type="entry name" value="ASKHA_NBD_PanK-III"/>
    <property type="match status" value="1"/>
</dbReference>
<dbReference type="Gene3D" id="3.30.420.40">
    <property type="match status" value="2"/>
</dbReference>
<dbReference type="HAMAP" id="MF_01274">
    <property type="entry name" value="Pantothen_kinase_3"/>
    <property type="match status" value="1"/>
</dbReference>
<dbReference type="InterPro" id="IPR043129">
    <property type="entry name" value="ATPase_NBD"/>
</dbReference>
<dbReference type="InterPro" id="IPR004619">
    <property type="entry name" value="Type_III_PanK"/>
</dbReference>
<dbReference type="NCBIfam" id="TIGR00671">
    <property type="entry name" value="baf"/>
    <property type="match status" value="1"/>
</dbReference>
<dbReference type="NCBIfam" id="NF009865">
    <property type="entry name" value="PRK13328.1-1"/>
    <property type="match status" value="1"/>
</dbReference>
<dbReference type="NCBIfam" id="NF009868">
    <property type="entry name" value="PRK13328.1-4"/>
    <property type="match status" value="1"/>
</dbReference>
<dbReference type="PANTHER" id="PTHR34265">
    <property type="entry name" value="TYPE III PANTOTHENATE KINASE"/>
    <property type="match status" value="1"/>
</dbReference>
<dbReference type="PANTHER" id="PTHR34265:SF1">
    <property type="entry name" value="TYPE III PANTOTHENATE KINASE"/>
    <property type="match status" value="1"/>
</dbReference>
<dbReference type="Pfam" id="PF03309">
    <property type="entry name" value="Pan_kinase"/>
    <property type="match status" value="1"/>
</dbReference>
<dbReference type="SUPFAM" id="SSF53067">
    <property type="entry name" value="Actin-like ATPase domain"/>
    <property type="match status" value="2"/>
</dbReference>
<sequence length="259" mass="27078">MSGMCLLIDAGNSRIKWALADTARHFVTSGAFEHASDAPDWSTLPAPRGAWISNVAGDAAAARIDALIEARWPALPRTVVRASAAQCGVTNGYAEPARLGSDRWAGLIGAHAAFADEHLLIATFGTATTLEALRADGHFAGGLIAPGWALMMRSLGMHTAQLPTVSIDAATNLLDELAENDAHAPFAIDTPHALSAGCLQAQAGLIERAWRDLEKAWQAPVRLVLSGGAADAIVRALTVPHTRHDTLVLTGLALIAHSA</sequence>
<accession>Q63XZ2</accession>
<comment type="function">
    <text evidence="1">Catalyzes the phosphorylation of pantothenate (Pan), the first step in CoA biosynthesis.</text>
</comment>
<comment type="catalytic activity">
    <reaction evidence="1">
        <text>(R)-pantothenate + ATP = (R)-4'-phosphopantothenate + ADP + H(+)</text>
        <dbReference type="Rhea" id="RHEA:16373"/>
        <dbReference type="ChEBI" id="CHEBI:10986"/>
        <dbReference type="ChEBI" id="CHEBI:15378"/>
        <dbReference type="ChEBI" id="CHEBI:29032"/>
        <dbReference type="ChEBI" id="CHEBI:30616"/>
        <dbReference type="ChEBI" id="CHEBI:456216"/>
        <dbReference type="EC" id="2.7.1.33"/>
    </reaction>
</comment>
<comment type="cofactor">
    <cofactor evidence="1">
        <name>NH4(+)</name>
        <dbReference type="ChEBI" id="CHEBI:28938"/>
    </cofactor>
    <cofactor evidence="1">
        <name>K(+)</name>
        <dbReference type="ChEBI" id="CHEBI:29103"/>
    </cofactor>
    <text evidence="1">A monovalent cation. Ammonium or potassium.</text>
</comment>
<comment type="pathway">
    <text evidence="1">Cofactor biosynthesis; coenzyme A biosynthesis; CoA from (R)-pantothenate: step 1/5.</text>
</comment>
<comment type="subunit">
    <text evidence="1">Homodimer.</text>
</comment>
<comment type="subcellular location">
    <subcellularLocation>
        <location evidence="1">Cytoplasm</location>
    </subcellularLocation>
</comment>
<comment type="similarity">
    <text evidence="1">Belongs to the type III pantothenate kinase family.</text>
</comment>
<keyword id="KW-0067">ATP-binding</keyword>
<keyword id="KW-0173">Coenzyme A biosynthesis</keyword>
<keyword id="KW-0963">Cytoplasm</keyword>
<keyword id="KW-0418">Kinase</keyword>
<keyword id="KW-0547">Nucleotide-binding</keyword>
<keyword id="KW-0630">Potassium</keyword>
<keyword id="KW-1185">Reference proteome</keyword>
<keyword id="KW-0808">Transferase</keyword>
<protein>
    <recommendedName>
        <fullName evidence="1">Type III pantothenate kinase</fullName>
        <ecNumber evidence="1">2.7.1.33</ecNumber>
    </recommendedName>
    <alternativeName>
        <fullName evidence="1">PanK-III</fullName>
    </alternativeName>
    <alternativeName>
        <fullName evidence="1">Pantothenic acid kinase</fullName>
    </alternativeName>
</protein>